<name>CKP3_CONPI</name>
<protein>
    <recommendedName>
        <fullName evidence="3">Conantokin-Pr3</fullName>
        <shortName evidence="3">Con-Pr3</shortName>
    </recommendedName>
</protein>
<keyword id="KW-0027">Amidation</keyword>
<keyword id="KW-0106">Calcium</keyword>
<keyword id="KW-0903">Direct protein sequencing</keyword>
<keyword id="KW-0301">Gamma-carboxyglutamic acid</keyword>
<keyword id="KW-0379">Hydroxylation</keyword>
<keyword id="KW-0872">Ion channel impairing toxin</keyword>
<keyword id="KW-1028">Ionotropic glutamate receptor inhibitor</keyword>
<keyword id="KW-0460">Magnesium</keyword>
<keyword id="KW-0479">Metal-binding</keyword>
<keyword id="KW-0528">Neurotoxin</keyword>
<keyword id="KW-0629">Postsynaptic neurotoxin</keyword>
<keyword id="KW-0964">Secreted</keyword>
<keyword id="KW-0800">Toxin</keyword>
<organism>
    <name type="scientific">Conus parius</name>
    <name type="common">Cone snail</name>
    <dbReference type="NCBI Taxonomy" id="505247"/>
    <lineage>
        <taxon>Eukaryota</taxon>
        <taxon>Metazoa</taxon>
        <taxon>Spiralia</taxon>
        <taxon>Lophotrochozoa</taxon>
        <taxon>Mollusca</taxon>
        <taxon>Gastropoda</taxon>
        <taxon>Caenogastropoda</taxon>
        <taxon>Neogastropoda</taxon>
        <taxon>Conoidea</taxon>
        <taxon>Conidae</taxon>
        <taxon>Conus</taxon>
        <taxon>Phasmoconus</taxon>
    </lineage>
</organism>
<feature type="peptide" id="PRO_0000353129" description="Conantokin-Pr3" evidence="2">
    <location>
        <begin position="1"/>
        <end position="19"/>
    </location>
</feature>
<feature type="binding site" description="via 4-carboxyglutamate" evidence="1">
    <location>
        <position position="10"/>
    </location>
    <ligand>
        <name>a divalent metal cation</name>
        <dbReference type="ChEBI" id="CHEBI:60240"/>
    </ligand>
</feature>
<feature type="binding site" description="via 4-carboxyglutamate" evidence="1">
    <location>
        <position position="14"/>
    </location>
    <ligand>
        <name>a divalent metal cation</name>
        <dbReference type="ChEBI" id="CHEBI:60240"/>
    </ligand>
</feature>
<feature type="modified residue" description="4-hydroxyproline" evidence="2">
    <location>
        <position position="3"/>
    </location>
</feature>
<feature type="modified residue" description="4-carboxyglutamate" evidence="2">
    <location>
        <position position="4"/>
    </location>
</feature>
<feature type="modified residue" description="4-carboxyglutamate" evidence="2">
    <location>
        <position position="10"/>
    </location>
</feature>
<feature type="modified residue" description="4-carboxyglutamate" evidence="2">
    <location>
        <position position="14"/>
    </location>
</feature>
<feature type="modified residue" description="Asparagine amide" evidence="2">
    <location>
        <position position="19"/>
    </location>
</feature>
<comment type="function">
    <text evidence="2">Conantokins inhibit N-methyl-D-aspartate (NMDA) receptors. This toxin has the highest potency for the NR2B/GRIN2B subunit. It induces sleep in 10-day-old mice when injected intracranially, and hyperactivity in 24-day-old mice.</text>
</comment>
<comment type="subcellular location">
    <subcellularLocation>
        <location evidence="2">Secreted</location>
    </subcellularLocation>
</comment>
<comment type="tissue specificity">
    <text evidence="5">Expressed by the venom duct.</text>
</comment>
<comment type="mass spectrometry"/>
<comment type="miscellaneous">
    <text evidence="4">The mature peptide does not contain cysteine residue.</text>
</comment>
<comment type="miscellaneous">
    <text evidence="2">Adopts an alpha-helical conformation in presence and in absence of divalent cations.</text>
</comment>
<comment type="similarity">
    <text evidence="4">Belongs to the conotoxin B superfamily.</text>
</comment>
<dbReference type="ConoServer" id="3535">
    <property type="toxin name" value="Conantokin-Pr3"/>
</dbReference>
<dbReference type="GO" id="GO:0005576">
    <property type="term" value="C:extracellular region"/>
    <property type="evidence" value="ECO:0007669"/>
    <property type="project" value="UniProtKB-SubCell"/>
</dbReference>
<dbReference type="GO" id="GO:0035792">
    <property type="term" value="C:host cell postsynaptic membrane"/>
    <property type="evidence" value="ECO:0007669"/>
    <property type="project" value="UniProtKB-KW"/>
</dbReference>
<dbReference type="GO" id="GO:0099106">
    <property type="term" value="F:ion channel regulator activity"/>
    <property type="evidence" value="ECO:0007669"/>
    <property type="project" value="UniProtKB-KW"/>
</dbReference>
<dbReference type="GO" id="GO:0046872">
    <property type="term" value="F:metal ion binding"/>
    <property type="evidence" value="ECO:0007669"/>
    <property type="project" value="UniProtKB-KW"/>
</dbReference>
<dbReference type="GO" id="GO:0090729">
    <property type="term" value="F:toxin activity"/>
    <property type="evidence" value="ECO:0007669"/>
    <property type="project" value="UniProtKB-KW"/>
</dbReference>
<dbReference type="InterPro" id="IPR005918">
    <property type="entry name" value="Conantokin_CS"/>
</dbReference>
<dbReference type="Pfam" id="PF10550">
    <property type="entry name" value="Toxin_36"/>
    <property type="match status" value="1"/>
</dbReference>
<accession>P0C8E2</accession>
<sequence>GEPEVAKWAEGLREKAASN</sequence>
<reference key="1">
    <citation type="journal article" date="2007" name="J. Biol. Chem.">
        <title>Novel conantokins from Conus parius venom are specific antagonists of N-methyl-D-aspartate receptors.</title>
        <authorList>
            <person name="Teichert R.W."/>
            <person name="Jimenez E.C."/>
            <person name="Twede V."/>
            <person name="Watkins M."/>
            <person name="Hollmann M."/>
            <person name="Bulaj G."/>
            <person name="Olivera B.M."/>
        </authorList>
    </citation>
    <scope>NUCLEOTIDE SEQUENCE [MRNA]</scope>
    <scope>PROTEIN SEQUENCE</scope>
    <scope>SYNTHESIS</scope>
    <scope>FUNCTION</scope>
    <scope>SUBCELLULAR LOCATION</scope>
    <scope>HYDROXYLATION AT PRO-3</scope>
    <scope>GAMMA-CARBOXYGLUTAMATION AT GLU-4; GLU-10 AND GLU-14</scope>
    <scope>AMIDATION AT ASN-19</scope>
    <scope>MASS SPECTROMETRY</scope>
    <source>
        <tissue>Venom</tissue>
        <tissue>Venom duct</tissue>
    </source>
</reference>
<evidence type="ECO:0000250" key="1">
    <source>
        <dbReference type="UniProtKB" id="P07231"/>
    </source>
</evidence>
<evidence type="ECO:0000269" key="2">
    <source>
    </source>
</evidence>
<evidence type="ECO:0000303" key="3">
    <source>
    </source>
</evidence>
<evidence type="ECO:0000305" key="4"/>
<evidence type="ECO:0000305" key="5">
    <source>
    </source>
</evidence>
<proteinExistence type="evidence at protein level"/>